<proteinExistence type="inferred from homology"/>
<reference key="1">
    <citation type="journal article" date="2001" name="Nucleic Acids Res.">
        <title>The complete genome sequence of the murine respiratory pathogen Mycoplasma pulmonis.</title>
        <authorList>
            <person name="Chambaud I."/>
            <person name="Heilig R."/>
            <person name="Ferris S."/>
            <person name="Barbe V."/>
            <person name="Samson D."/>
            <person name="Galisson F."/>
            <person name="Moszer I."/>
            <person name="Dybvig K."/>
            <person name="Wroblewski H."/>
            <person name="Viari A."/>
            <person name="Rocha E.P.C."/>
            <person name="Blanchard A."/>
        </authorList>
    </citation>
    <scope>NUCLEOTIDE SEQUENCE [LARGE SCALE GENOMIC DNA]</scope>
    <source>
        <strain>UAB CTIP</strain>
    </source>
</reference>
<feature type="chain" id="PRO_0000234737" description="Tyrosine--tRNA ligase">
    <location>
        <begin position="1"/>
        <end position="414"/>
    </location>
</feature>
<feature type="domain" description="S4 RNA-binding" evidence="1">
    <location>
        <begin position="349"/>
        <end position="413"/>
    </location>
</feature>
<feature type="short sequence motif" description="'HIGH' region">
    <location>
        <begin position="43"/>
        <end position="52"/>
    </location>
</feature>
<feature type="short sequence motif" description="'KMSKS' region">
    <location>
        <begin position="227"/>
        <end position="231"/>
    </location>
</feature>
<feature type="binding site" evidence="1">
    <location>
        <position position="38"/>
    </location>
    <ligand>
        <name>L-tyrosine</name>
        <dbReference type="ChEBI" id="CHEBI:58315"/>
    </ligand>
</feature>
<feature type="binding site" evidence="1">
    <location>
        <position position="165"/>
    </location>
    <ligand>
        <name>L-tyrosine</name>
        <dbReference type="ChEBI" id="CHEBI:58315"/>
    </ligand>
</feature>
<feature type="binding site" evidence="1">
    <location>
        <position position="169"/>
    </location>
    <ligand>
        <name>L-tyrosine</name>
        <dbReference type="ChEBI" id="CHEBI:58315"/>
    </ligand>
</feature>
<feature type="binding site" evidence="1">
    <location>
        <position position="230"/>
    </location>
    <ligand>
        <name>ATP</name>
        <dbReference type="ChEBI" id="CHEBI:30616"/>
    </ligand>
</feature>
<evidence type="ECO:0000255" key="1">
    <source>
        <dbReference type="HAMAP-Rule" id="MF_02006"/>
    </source>
</evidence>
<organism>
    <name type="scientific">Mycoplasmopsis pulmonis (strain UAB CTIP)</name>
    <name type="common">Mycoplasma pulmonis</name>
    <dbReference type="NCBI Taxonomy" id="272635"/>
    <lineage>
        <taxon>Bacteria</taxon>
        <taxon>Bacillati</taxon>
        <taxon>Mycoplasmatota</taxon>
        <taxon>Mycoplasmoidales</taxon>
        <taxon>Metamycoplasmataceae</taxon>
        <taxon>Mycoplasmopsis</taxon>
    </lineage>
</organism>
<comment type="function">
    <text evidence="1">Catalyzes the attachment of tyrosine to tRNA(Tyr) in a two-step reaction: tyrosine is first activated by ATP to form Tyr-AMP and then transferred to the acceptor end of tRNA(Tyr).</text>
</comment>
<comment type="catalytic activity">
    <reaction evidence="1">
        <text>tRNA(Tyr) + L-tyrosine + ATP = L-tyrosyl-tRNA(Tyr) + AMP + diphosphate + H(+)</text>
        <dbReference type="Rhea" id="RHEA:10220"/>
        <dbReference type="Rhea" id="RHEA-COMP:9706"/>
        <dbReference type="Rhea" id="RHEA-COMP:9707"/>
        <dbReference type="ChEBI" id="CHEBI:15378"/>
        <dbReference type="ChEBI" id="CHEBI:30616"/>
        <dbReference type="ChEBI" id="CHEBI:33019"/>
        <dbReference type="ChEBI" id="CHEBI:58315"/>
        <dbReference type="ChEBI" id="CHEBI:78442"/>
        <dbReference type="ChEBI" id="CHEBI:78536"/>
        <dbReference type="ChEBI" id="CHEBI:456215"/>
        <dbReference type="EC" id="6.1.1.1"/>
    </reaction>
</comment>
<comment type="subunit">
    <text evidence="1">Homodimer.</text>
</comment>
<comment type="subcellular location">
    <subcellularLocation>
        <location evidence="1">Cytoplasm</location>
    </subcellularLocation>
</comment>
<comment type="similarity">
    <text evidence="1">Belongs to the class-I aminoacyl-tRNA synthetase family. TyrS type 1 subfamily.</text>
</comment>
<dbReference type="EC" id="6.1.1.1" evidence="1"/>
<dbReference type="EMBL" id="AL445564">
    <property type="protein sequence ID" value="CAC13658.1"/>
    <property type="molecule type" value="Genomic_DNA"/>
</dbReference>
<dbReference type="PIR" id="E90572">
    <property type="entry name" value="E90572"/>
</dbReference>
<dbReference type="RefSeq" id="WP_010925286.1">
    <property type="nucleotide sequence ID" value="NC_002771.1"/>
</dbReference>
<dbReference type="SMR" id="Q98Q81"/>
<dbReference type="STRING" id="272635.gene:17577086"/>
<dbReference type="KEGG" id="mpu:MYPU_4850"/>
<dbReference type="eggNOG" id="COG0162">
    <property type="taxonomic scope" value="Bacteria"/>
</dbReference>
<dbReference type="HOGENOM" id="CLU_024003_0_2_14"/>
<dbReference type="BioCyc" id="MPUL272635:G1GT6-489-MONOMER"/>
<dbReference type="Proteomes" id="UP000000528">
    <property type="component" value="Chromosome"/>
</dbReference>
<dbReference type="GO" id="GO:0005829">
    <property type="term" value="C:cytosol"/>
    <property type="evidence" value="ECO:0007669"/>
    <property type="project" value="TreeGrafter"/>
</dbReference>
<dbReference type="GO" id="GO:0005524">
    <property type="term" value="F:ATP binding"/>
    <property type="evidence" value="ECO:0007669"/>
    <property type="project" value="UniProtKB-UniRule"/>
</dbReference>
<dbReference type="GO" id="GO:0003723">
    <property type="term" value="F:RNA binding"/>
    <property type="evidence" value="ECO:0007669"/>
    <property type="project" value="UniProtKB-KW"/>
</dbReference>
<dbReference type="GO" id="GO:0004831">
    <property type="term" value="F:tyrosine-tRNA ligase activity"/>
    <property type="evidence" value="ECO:0007669"/>
    <property type="project" value="UniProtKB-UniRule"/>
</dbReference>
<dbReference type="GO" id="GO:0006437">
    <property type="term" value="P:tyrosyl-tRNA aminoacylation"/>
    <property type="evidence" value="ECO:0007669"/>
    <property type="project" value="UniProtKB-UniRule"/>
</dbReference>
<dbReference type="CDD" id="cd00805">
    <property type="entry name" value="TyrRS_core"/>
    <property type="match status" value="1"/>
</dbReference>
<dbReference type="FunFam" id="1.10.240.10:FF:000001">
    <property type="entry name" value="Tyrosine--tRNA ligase"/>
    <property type="match status" value="1"/>
</dbReference>
<dbReference type="Gene3D" id="3.40.50.620">
    <property type="entry name" value="HUPs"/>
    <property type="match status" value="1"/>
</dbReference>
<dbReference type="Gene3D" id="3.10.290.10">
    <property type="entry name" value="RNA-binding S4 domain"/>
    <property type="match status" value="1"/>
</dbReference>
<dbReference type="Gene3D" id="1.10.240.10">
    <property type="entry name" value="Tyrosyl-Transfer RNA Synthetase"/>
    <property type="match status" value="1"/>
</dbReference>
<dbReference type="HAMAP" id="MF_02006">
    <property type="entry name" value="Tyr_tRNA_synth_type1"/>
    <property type="match status" value="1"/>
</dbReference>
<dbReference type="InterPro" id="IPR002305">
    <property type="entry name" value="aa-tRNA-synth_Ic"/>
</dbReference>
<dbReference type="InterPro" id="IPR014729">
    <property type="entry name" value="Rossmann-like_a/b/a_fold"/>
</dbReference>
<dbReference type="InterPro" id="IPR036986">
    <property type="entry name" value="S4_RNA-bd_sf"/>
</dbReference>
<dbReference type="InterPro" id="IPR054608">
    <property type="entry name" value="SYY-like_C"/>
</dbReference>
<dbReference type="InterPro" id="IPR002307">
    <property type="entry name" value="Tyr-tRNA-ligase"/>
</dbReference>
<dbReference type="InterPro" id="IPR024088">
    <property type="entry name" value="Tyr-tRNA-ligase_bac-type"/>
</dbReference>
<dbReference type="InterPro" id="IPR024107">
    <property type="entry name" value="Tyr-tRNA-ligase_bac_1"/>
</dbReference>
<dbReference type="NCBIfam" id="TIGR00234">
    <property type="entry name" value="tyrS"/>
    <property type="match status" value="1"/>
</dbReference>
<dbReference type="PANTHER" id="PTHR11766:SF0">
    <property type="entry name" value="TYROSINE--TRNA LIGASE, MITOCHONDRIAL"/>
    <property type="match status" value="1"/>
</dbReference>
<dbReference type="PANTHER" id="PTHR11766">
    <property type="entry name" value="TYROSYL-TRNA SYNTHETASE"/>
    <property type="match status" value="1"/>
</dbReference>
<dbReference type="Pfam" id="PF22421">
    <property type="entry name" value="SYY_C-terminal"/>
    <property type="match status" value="1"/>
</dbReference>
<dbReference type="Pfam" id="PF00579">
    <property type="entry name" value="tRNA-synt_1b"/>
    <property type="match status" value="1"/>
</dbReference>
<dbReference type="PRINTS" id="PR01040">
    <property type="entry name" value="TRNASYNTHTYR"/>
</dbReference>
<dbReference type="SUPFAM" id="SSF55174">
    <property type="entry name" value="Alpha-L RNA-binding motif"/>
    <property type="match status" value="1"/>
</dbReference>
<dbReference type="SUPFAM" id="SSF52374">
    <property type="entry name" value="Nucleotidylyl transferase"/>
    <property type="match status" value="1"/>
</dbReference>
<keyword id="KW-0030">Aminoacyl-tRNA synthetase</keyword>
<keyword id="KW-0067">ATP-binding</keyword>
<keyword id="KW-0963">Cytoplasm</keyword>
<keyword id="KW-0436">Ligase</keyword>
<keyword id="KW-0547">Nucleotide-binding</keyword>
<keyword id="KW-0648">Protein biosynthesis</keyword>
<keyword id="KW-1185">Reference proteome</keyword>
<keyword id="KW-0694">RNA-binding</keyword>
<protein>
    <recommendedName>
        <fullName evidence="1">Tyrosine--tRNA ligase</fullName>
        <ecNumber evidence="1">6.1.1.1</ecNumber>
    </recommendedName>
    <alternativeName>
        <fullName evidence="1">Tyrosyl-tRNA synthetase</fullName>
        <shortName evidence="1">TyrRS</shortName>
    </alternativeName>
</protein>
<gene>
    <name evidence="1" type="primary">tyrS</name>
    <name type="ordered locus">MYPU_4850</name>
</gene>
<name>SYY_MYCPU</name>
<sequence>MSQNKLKTLIEELKKRKVFNNITSEEKVDLITLDHGIYVGFDPTAISLHLGNYIQMVNLKRFQNVGFKTIAILGGATSMIGDPSFKDSERKLLSNETILENKKHIRKQLENFGFKVIDNLDFYKDMNILDYLRSVGKFFNVSTMMSRDSVANRIQSGLSFTEFSYQTLQAYDFKVLCEKENVMMQLGGSDQWGNLVSGLDFINKTLSKNLPTIGITMNLLVDSNGNKIGKSTGGASLWIDKTLTSPYVLYQYLLNTNDDDAYNLLLQLTFLQLSEIERIKNEHLKNPKLRLMQSRLSFEVVKDIHGKEEAQRALHISTSLFKEKNSWFNLSLEDLIQLKGSVDFVPFKDDLFLTLVDSKIISSKREFNEFVRDKSLKINGQDVTGLDYDLPWENYDNKYLILKKGKKQYWVIYK</sequence>
<accession>Q98Q81</accession>